<accession>B7HJK3</accession>
<reference key="1">
    <citation type="submission" date="2008-10" db="EMBL/GenBank/DDBJ databases">
        <title>Genome sequence of Bacillus cereus B4264.</title>
        <authorList>
            <person name="Dodson R.J."/>
            <person name="Durkin A.S."/>
            <person name="Rosovitz M.J."/>
            <person name="Rasko D.A."/>
            <person name="Hoffmaster A."/>
            <person name="Ravel J."/>
            <person name="Sutton G."/>
        </authorList>
    </citation>
    <scope>NUCLEOTIDE SEQUENCE [LARGE SCALE GENOMIC DNA]</scope>
    <source>
        <strain>B4264</strain>
    </source>
</reference>
<sequence>MGKYFGTDGVRGVANKELTPELAFKIGRFGGYVLTKDTDRPKVIIGRDTRVSGHMLEGALVAGLLSTGAEVMRLGVISTPGVAYLTKALDAQAGVMISASHNPVQDNGIKFFGSDGFKLTDEQEAEIEALLDKEVDELPRPTGTNLGQVSDYFEGGQKYLQYIKQTVEEDFSGLHIALDCAHGATSSLAPYLFADLEADISTMGTSPNGMNINEGVGSTHPEGLAELVKEKGADIGLAFDGDGDRLIAVDEKGNIVDGDQIMFICAKYMKETGQLKHNTVVSTVMSNLGFYKALEANNITSDKTAVGDRYVMEEMKRGGYNLGGEQSGHIILLDYITTGDGMLSALQLVNIMKMTKKPLSELAGEMTKFPQLLVNVRVTDKKLALENEKIKEIIRVVEEEMNGDGRILVRPSGTEPLIRVMAEAPTQEVCDAYVHRIVEVVKAEVGAE</sequence>
<gene>
    <name evidence="1" type="primary">glmM</name>
    <name type="ordered locus">BCB4264_A0189</name>
</gene>
<keyword id="KW-0413">Isomerase</keyword>
<keyword id="KW-0460">Magnesium</keyword>
<keyword id="KW-0479">Metal-binding</keyword>
<keyword id="KW-0597">Phosphoprotein</keyword>
<dbReference type="EC" id="5.4.2.10" evidence="1"/>
<dbReference type="EMBL" id="CP001176">
    <property type="protein sequence ID" value="ACK61674.1"/>
    <property type="molecule type" value="Genomic_DNA"/>
</dbReference>
<dbReference type="RefSeq" id="WP_000521476.1">
    <property type="nucleotide sequence ID" value="NZ_VEHB01000016.1"/>
</dbReference>
<dbReference type="SMR" id="B7HJK3"/>
<dbReference type="GeneID" id="72446986"/>
<dbReference type="KEGG" id="bcb:BCB4264_A0189"/>
<dbReference type="HOGENOM" id="CLU_016950_7_0_9"/>
<dbReference type="Proteomes" id="UP000007096">
    <property type="component" value="Chromosome"/>
</dbReference>
<dbReference type="GO" id="GO:0005829">
    <property type="term" value="C:cytosol"/>
    <property type="evidence" value="ECO:0007669"/>
    <property type="project" value="TreeGrafter"/>
</dbReference>
<dbReference type="GO" id="GO:0000287">
    <property type="term" value="F:magnesium ion binding"/>
    <property type="evidence" value="ECO:0007669"/>
    <property type="project" value="UniProtKB-UniRule"/>
</dbReference>
<dbReference type="GO" id="GO:0008966">
    <property type="term" value="F:phosphoglucosamine mutase activity"/>
    <property type="evidence" value="ECO:0007669"/>
    <property type="project" value="UniProtKB-UniRule"/>
</dbReference>
<dbReference type="GO" id="GO:0004615">
    <property type="term" value="F:phosphomannomutase activity"/>
    <property type="evidence" value="ECO:0007669"/>
    <property type="project" value="TreeGrafter"/>
</dbReference>
<dbReference type="GO" id="GO:0005975">
    <property type="term" value="P:carbohydrate metabolic process"/>
    <property type="evidence" value="ECO:0007669"/>
    <property type="project" value="InterPro"/>
</dbReference>
<dbReference type="GO" id="GO:0009252">
    <property type="term" value="P:peptidoglycan biosynthetic process"/>
    <property type="evidence" value="ECO:0007669"/>
    <property type="project" value="TreeGrafter"/>
</dbReference>
<dbReference type="GO" id="GO:0006048">
    <property type="term" value="P:UDP-N-acetylglucosamine biosynthetic process"/>
    <property type="evidence" value="ECO:0007669"/>
    <property type="project" value="TreeGrafter"/>
</dbReference>
<dbReference type="CDD" id="cd05802">
    <property type="entry name" value="GlmM"/>
    <property type="match status" value="1"/>
</dbReference>
<dbReference type="FunFam" id="3.30.310.50:FF:000001">
    <property type="entry name" value="Phosphoglucosamine mutase"/>
    <property type="match status" value="1"/>
</dbReference>
<dbReference type="FunFam" id="3.40.120.10:FF:000001">
    <property type="entry name" value="Phosphoglucosamine mutase"/>
    <property type="match status" value="1"/>
</dbReference>
<dbReference type="FunFam" id="3.40.120.10:FF:000002">
    <property type="entry name" value="Phosphoglucosamine mutase"/>
    <property type="match status" value="1"/>
</dbReference>
<dbReference type="Gene3D" id="3.40.120.10">
    <property type="entry name" value="Alpha-D-Glucose-1,6-Bisphosphate, subunit A, domain 3"/>
    <property type="match status" value="3"/>
</dbReference>
<dbReference type="Gene3D" id="3.30.310.50">
    <property type="entry name" value="Alpha-D-phosphohexomutase, C-terminal domain"/>
    <property type="match status" value="1"/>
</dbReference>
<dbReference type="HAMAP" id="MF_01554_B">
    <property type="entry name" value="GlmM_B"/>
    <property type="match status" value="1"/>
</dbReference>
<dbReference type="InterPro" id="IPR005844">
    <property type="entry name" value="A-D-PHexomutase_a/b/a-I"/>
</dbReference>
<dbReference type="InterPro" id="IPR016055">
    <property type="entry name" value="A-D-PHexomutase_a/b/a-I/II/III"/>
</dbReference>
<dbReference type="InterPro" id="IPR005845">
    <property type="entry name" value="A-D-PHexomutase_a/b/a-II"/>
</dbReference>
<dbReference type="InterPro" id="IPR005846">
    <property type="entry name" value="A-D-PHexomutase_a/b/a-III"/>
</dbReference>
<dbReference type="InterPro" id="IPR005843">
    <property type="entry name" value="A-D-PHexomutase_C"/>
</dbReference>
<dbReference type="InterPro" id="IPR036900">
    <property type="entry name" value="A-D-PHexomutase_C_sf"/>
</dbReference>
<dbReference type="InterPro" id="IPR016066">
    <property type="entry name" value="A-D-PHexomutase_CS"/>
</dbReference>
<dbReference type="InterPro" id="IPR005841">
    <property type="entry name" value="Alpha-D-phosphohexomutase_SF"/>
</dbReference>
<dbReference type="InterPro" id="IPR006352">
    <property type="entry name" value="GlmM_bact"/>
</dbReference>
<dbReference type="InterPro" id="IPR050060">
    <property type="entry name" value="Phosphoglucosamine_mutase"/>
</dbReference>
<dbReference type="NCBIfam" id="TIGR01455">
    <property type="entry name" value="glmM"/>
    <property type="match status" value="1"/>
</dbReference>
<dbReference type="NCBIfam" id="NF008139">
    <property type="entry name" value="PRK10887.1"/>
    <property type="match status" value="1"/>
</dbReference>
<dbReference type="PANTHER" id="PTHR42946:SF1">
    <property type="entry name" value="PHOSPHOGLUCOMUTASE (ALPHA-D-GLUCOSE-1,6-BISPHOSPHATE-DEPENDENT)"/>
    <property type="match status" value="1"/>
</dbReference>
<dbReference type="PANTHER" id="PTHR42946">
    <property type="entry name" value="PHOSPHOHEXOSE MUTASE"/>
    <property type="match status" value="1"/>
</dbReference>
<dbReference type="Pfam" id="PF02878">
    <property type="entry name" value="PGM_PMM_I"/>
    <property type="match status" value="1"/>
</dbReference>
<dbReference type="Pfam" id="PF02879">
    <property type="entry name" value="PGM_PMM_II"/>
    <property type="match status" value="1"/>
</dbReference>
<dbReference type="Pfam" id="PF02880">
    <property type="entry name" value="PGM_PMM_III"/>
    <property type="match status" value="1"/>
</dbReference>
<dbReference type="Pfam" id="PF00408">
    <property type="entry name" value="PGM_PMM_IV"/>
    <property type="match status" value="1"/>
</dbReference>
<dbReference type="PRINTS" id="PR00509">
    <property type="entry name" value="PGMPMM"/>
</dbReference>
<dbReference type="SUPFAM" id="SSF55957">
    <property type="entry name" value="Phosphoglucomutase, C-terminal domain"/>
    <property type="match status" value="1"/>
</dbReference>
<dbReference type="SUPFAM" id="SSF53738">
    <property type="entry name" value="Phosphoglucomutase, first 3 domains"/>
    <property type="match status" value="3"/>
</dbReference>
<dbReference type="PROSITE" id="PS00710">
    <property type="entry name" value="PGM_PMM"/>
    <property type="match status" value="1"/>
</dbReference>
<protein>
    <recommendedName>
        <fullName evidence="1">Phosphoglucosamine mutase</fullName>
        <ecNumber evidence="1">5.4.2.10</ecNumber>
    </recommendedName>
</protein>
<feature type="chain" id="PRO_1000201060" description="Phosphoglucosamine mutase">
    <location>
        <begin position="1"/>
        <end position="448"/>
    </location>
</feature>
<feature type="active site" description="Phosphoserine intermediate" evidence="1">
    <location>
        <position position="100"/>
    </location>
</feature>
<feature type="binding site" description="via phosphate group" evidence="1">
    <location>
        <position position="100"/>
    </location>
    <ligand>
        <name>Mg(2+)</name>
        <dbReference type="ChEBI" id="CHEBI:18420"/>
    </ligand>
</feature>
<feature type="binding site" evidence="1">
    <location>
        <position position="240"/>
    </location>
    <ligand>
        <name>Mg(2+)</name>
        <dbReference type="ChEBI" id="CHEBI:18420"/>
    </ligand>
</feature>
<feature type="binding site" evidence="1">
    <location>
        <position position="242"/>
    </location>
    <ligand>
        <name>Mg(2+)</name>
        <dbReference type="ChEBI" id="CHEBI:18420"/>
    </ligand>
</feature>
<feature type="binding site" evidence="1">
    <location>
        <position position="244"/>
    </location>
    <ligand>
        <name>Mg(2+)</name>
        <dbReference type="ChEBI" id="CHEBI:18420"/>
    </ligand>
</feature>
<feature type="modified residue" description="Phosphoserine" evidence="1">
    <location>
        <position position="100"/>
    </location>
</feature>
<evidence type="ECO:0000255" key="1">
    <source>
        <dbReference type="HAMAP-Rule" id="MF_01554"/>
    </source>
</evidence>
<comment type="function">
    <text evidence="1">Catalyzes the conversion of glucosamine-6-phosphate to glucosamine-1-phosphate.</text>
</comment>
<comment type="catalytic activity">
    <reaction evidence="1">
        <text>alpha-D-glucosamine 1-phosphate = D-glucosamine 6-phosphate</text>
        <dbReference type="Rhea" id="RHEA:23424"/>
        <dbReference type="ChEBI" id="CHEBI:58516"/>
        <dbReference type="ChEBI" id="CHEBI:58725"/>
        <dbReference type="EC" id="5.4.2.10"/>
    </reaction>
</comment>
<comment type="cofactor">
    <cofactor evidence="1">
        <name>Mg(2+)</name>
        <dbReference type="ChEBI" id="CHEBI:18420"/>
    </cofactor>
    <text evidence="1">Binds 1 Mg(2+) ion per subunit.</text>
</comment>
<comment type="PTM">
    <text evidence="1">Activated by phosphorylation.</text>
</comment>
<comment type="similarity">
    <text evidence="1">Belongs to the phosphohexose mutase family.</text>
</comment>
<organism>
    <name type="scientific">Bacillus cereus (strain B4264)</name>
    <dbReference type="NCBI Taxonomy" id="405532"/>
    <lineage>
        <taxon>Bacteria</taxon>
        <taxon>Bacillati</taxon>
        <taxon>Bacillota</taxon>
        <taxon>Bacilli</taxon>
        <taxon>Bacillales</taxon>
        <taxon>Bacillaceae</taxon>
        <taxon>Bacillus</taxon>
        <taxon>Bacillus cereus group</taxon>
    </lineage>
</organism>
<name>GLMM_BACC4</name>
<proteinExistence type="inferred from homology"/>